<accession>P9WMG0</accession>
<accession>L0T7T8</accession>
<accession>Q10550</accession>
<evidence type="ECO:0000255" key="1">
    <source>
        <dbReference type="PROSITE-ProRule" id="PRU00411"/>
    </source>
</evidence>
<protein>
    <recommendedName>
        <fullName>Putative HTH-type transcriptional regulator MT0914</fullName>
    </recommendedName>
</protein>
<keyword id="KW-0238">DNA-binding</keyword>
<keyword id="KW-1185">Reference proteome</keyword>
<keyword id="KW-0804">Transcription</keyword>
<keyword id="KW-0805">Transcription regulation</keyword>
<sequence>MRALLAQNRLVTLCGTGGVGKTRLAIQIASASELRDGLCFVDLAPITESGIVAATAARAVGLPDQPGRSTMDSLRRFIGNRRMLMVLDNCEHLLDACAALVVELLGACPELTILATSREPIGMAGEITWRVPSMSITDEAVELFADRASRVQPGFTIANHNAAAVGEICRRLDGIPLAIEFAAARVRSMSPLEIADGLDDCFRLLAGGVRGAVQRQQTLRASIDWSHALLTETEQILFRRLAPFVGGFDLAAVRAVAAGSDLDPFSVLDQLTLLVDKSLVVADDCQGRTRYRLLETVRRYALEKLGDSGEADVHARHRDYYTALAASLNTPADNDHQRLVARAETEIDNLRAAFAWSRENGHITEALQLASSLQPIWFGRAHLREGLSWFNSILEDQRFHRLAVSTAVRARALADKAMLSTWLATSPVGATDIIAPAQQALAMAREVGDPAALVRALTACGCSSGYNAEAAAPYFAEATDLARAIDDKWTLCQILYWRGVGTCISGDPNALRAAAEECRDLADTIGDRFVSRHCSLWLSLAQMWAGNLTEALELSREITAEAEASNDVPTKVLGLYTQAQVLAYCGASAAHAIAGACIAAATELGGVYQGIGYAAMTYAALAAGDVTAALEASDAARPILRAQPDQVTMHQVLMAQLALAGGDAIAARQFANDAVDATNGWHRMVALTIRARVATARGEPELARDDAHAALACGAELHIYQGMPDAMELLAGLAGEVGSHSEGVRLLGAAAALRQQTRQVRFKIWDAGYQASVTALREAMGDEDFDRAWAEGAALSTDEAIAYAQRGRGERKRPARGWGSLTPTERDVVRLVSEGLSNKDIAKRLFVSPRTVQTHLTHVYAKLGLASRVQLVDEAARRGSPS</sequence>
<reference key="1">
    <citation type="journal article" date="2002" name="J. Bacteriol.">
        <title>Whole-genome comparison of Mycobacterium tuberculosis clinical and laboratory strains.</title>
        <authorList>
            <person name="Fleischmann R.D."/>
            <person name="Alland D."/>
            <person name="Eisen J.A."/>
            <person name="Carpenter L."/>
            <person name="White O."/>
            <person name="Peterson J.D."/>
            <person name="DeBoy R.T."/>
            <person name="Dodson R.J."/>
            <person name="Gwinn M.L."/>
            <person name="Haft D.H."/>
            <person name="Hickey E.K."/>
            <person name="Kolonay J.F."/>
            <person name="Nelson W.C."/>
            <person name="Umayam L.A."/>
            <person name="Ermolaeva M.D."/>
            <person name="Salzberg S.L."/>
            <person name="Delcher A."/>
            <person name="Utterback T.R."/>
            <person name="Weidman J.F."/>
            <person name="Khouri H.M."/>
            <person name="Gill J."/>
            <person name="Mikula A."/>
            <person name="Bishai W."/>
            <person name="Jacobs W.R. Jr."/>
            <person name="Venter J.C."/>
            <person name="Fraser C.M."/>
        </authorList>
    </citation>
    <scope>NUCLEOTIDE SEQUENCE [LARGE SCALE GENOMIC DNA]</scope>
    <source>
        <strain>CDC 1551 / Oshkosh</strain>
    </source>
</reference>
<name>Y890_MYCTO</name>
<gene>
    <name type="ordered locus">MT0914</name>
</gene>
<feature type="chain" id="PRO_0000427310" description="Putative HTH-type transcriptional regulator MT0914">
    <location>
        <begin position="1"/>
        <end position="882"/>
    </location>
</feature>
<feature type="domain" description="HTH luxR-type" evidence="1">
    <location>
        <begin position="814"/>
        <end position="879"/>
    </location>
</feature>
<feature type="DNA-binding region" description="H-T-H motif" evidence="1">
    <location>
        <begin position="838"/>
        <end position="857"/>
    </location>
</feature>
<organism>
    <name type="scientific">Mycobacterium tuberculosis (strain CDC 1551 / Oshkosh)</name>
    <dbReference type="NCBI Taxonomy" id="83331"/>
    <lineage>
        <taxon>Bacteria</taxon>
        <taxon>Bacillati</taxon>
        <taxon>Actinomycetota</taxon>
        <taxon>Actinomycetes</taxon>
        <taxon>Mycobacteriales</taxon>
        <taxon>Mycobacteriaceae</taxon>
        <taxon>Mycobacterium</taxon>
        <taxon>Mycobacterium tuberculosis complex</taxon>
    </lineage>
</organism>
<dbReference type="EMBL" id="AE000516">
    <property type="protein sequence ID" value="AAK45159.1"/>
    <property type="molecule type" value="Genomic_DNA"/>
</dbReference>
<dbReference type="PIR" id="G70781">
    <property type="entry name" value="G70781"/>
</dbReference>
<dbReference type="SMR" id="P9WMG0"/>
<dbReference type="KEGG" id="mtc:MT0914"/>
<dbReference type="PATRIC" id="fig|83331.31.peg.982"/>
<dbReference type="HOGENOM" id="CLU_004665_5_0_11"/>
<dbReference type="Proteomes" id="UP000001020">
    <property type="component" value="Chromosome"/>
</dbReference>
<dbReference type="GO" id="GO:0003677">
    <property type="term" value="F:DNA binding"/>
    <property type="evidence" value="ECO:0007669"/>
    <property type="project" value="UniProtKB-KW"/>
</dbReference>
<dbReference type="GO" id="GO:0006355">
    <property type="term" value="P:regulation of DNA-templated transcription"/>
    <property type="evidence" value="ECO:0007669"/>
    <property type="project" value="InterPro"/>
</dbReference>
<dbReference type="CDD" id="cd06170">
    <property type="entry name" value="LuxR_C_like"/>
    <property type="match status" value="1"/>
</dbReference>
<dbReference type="FunFam" id="1.10.10.10:FF:000553">
    <property type="entry name" value="Transcriptional regulator, LuxR family"/>
    <property type="match status" value="1"/>
</dbReference>
<dbReference type="Gene3D" id="3.40.50.300">
    <property type="entry name" value="P-loop containing nucleotide triphosphate hydrolases"/>
    <property type="match status" value="1"/>
</dbReference>
<dbReference type="Gene3D" id="1.25.40.10">
    <property type="entry name" value="Tetratricopeptide repeat domain"/>
    <property type="match status" value="1"/>
</dbReference>
<dbReference type="Gene3D" id="1.10.10.10">
    <property type="entry name" value="Winged helix-like DNA-binding domain superfamily/Winged helix DNA-binding domain"/>
    <property type="match status" value="1"/>
</dbReference>
<dbReference type="InterPro" id="IPR027417">
    <property type="entry name" value="P-loop_NTPase"/>
</dbReference>
<dbReference type="InterPro" id="IPR016032">
    <property type="entry name" value="Sig_transdc_resp-reg_C-effctor"/>
</dbReference>
<dbReference type="InterPro" id="IPR011990">
    <property type="entry name" value="TPR-like_helical_dom_sf"/>
</dbReference>
<dbReference type="InterPro" id="IPR000792">
    <property type="entry name" value="Tscrpt_reg_LuxR_C"/>
</dbReference>
<dbReference type="InterPro" id="IPR036388">
    <property type="entry name" value="WH-like_DNA-bd_sf"/>
</dbReference>
<dbReference type="PANTHER" id="PTHR47691:SF3">
    <property type="entry name" value="HTH-TYPE TRANSCRIPTIONAL REGULATOR RV0890C-RELATED"/>
    <property type="match status" value="1"/>
</dbReference>
<dbReference type="PANTHER" id="PTHR47691">
    <property type="entry name" value="REGULATOR-RELATED"/>
    <property type="match status" value="1"/>
</dbReference>
<dbReference type="Pfam" id="PF00196">
    <property type="entry name" value="GerE"/>
    <property type="match status" value="1"/>
</dbReference>
<dbReference type="PRINTS" id="PR00364">
    <property type="entry name" value="DISEASERSIST"/>
</dbReference>
<dbReference type="PRINTS" id="PR00038">
    <property type="entry name" value="HTHLUXR"/>
</dbReference>
<dbReference type="SMART" id="SM00421">
    <property type="entry name" value="HTH_LUXR"/>
    <property type="match status" value="1"/>
</dbReference>
<dbReference type="SUPFAM" id="SSF46894">
    <property type="entry name" value="C-terminal effector domain of the bipartite response regulators"/>
    <property type="match status" value="1"/>
</dbReference>
<dbReference type="SUPFAM" id="SSF52540">
    <property type="entry name" value="P-loop containing nucleoside triphosphate hydrolases"/>
    <property type="match status" value="1"/>
</dbReference>
<dbReference type="PROSITE" id="PS00622">
    <property type="entry name" value="HTH_LUXR_1"/>
    <property type="match status" value="1"/>
</dbReference>
<dbReference type="PROSITE" id="PS50043">
    <property type="entry name" value="HTH_LUXR_2"/>
    <property type="match status" value="1"/>
</dbReference>
<proteinExistence type="predicted"/>